<feature type="chain" id="PRO_1000134804" description="Transcriptional regulator MraZ">
    <location>
        <begin position="1"/>
        <end position="152"/>
    </location>
</feature>
<feature type="domain" description="SpoVT-AbrB 1" evidence="2">
    <location>
        <begin position="5"/>
        <end position="52"/>
    </location>
</feature>
<feature type="domain" description="SpoVT-AbrB 2" evidence="2">
    <location>
        <begin position="81"/>
        <end position="124"/>
    </location>
</feature>
<accession>B5Y1V6</accession>
<comment type="function">
    <text evidence="1">Negatively regulates its own expression and that of the subsequent genes in the proximal part of the division and cell wall (dcw) gene cluster. Acts by binding directly to DNA. May also regulate the expression of genes outside the dcw cluster.</text>
</comment>
<comment type="subunit">
    <text evidence="1">Forms oligomers.</text>
</comment>
<comment type="subcellular location">
    <subcellularLocation>
        <location evidence="1">Cytoplasm</location>
        <location evidence="1">Nucleoid</location>
    </subcellularLocation>
</comment>
<comment type="similarity">
    <text evidence="1">Belongs to the MraZ family.</text>
</comment>
<organism>
    <name type="scientific">Klebsiella pneumoniae (strain 342)</name>
    <dbReference type="NCBI Taxonomy" id="507522"/>
    <lineage>
        <taxon>Bacteria</taxon>
        <taxon>Pseudomonadati</taxon>
        <taxon>Pseudomonadota</taxon>
        <taxon>Gammaproteobacteria</taxon>
        <taxon>Enterobacterales</taxon>
        <taxon>Enterobacteriaceae</taxon>
        <taxon>Klebsiella/Raoultella group</taxon>
        <taxon>Klebsiella</taxon>
        <taxon>Klebsiella pneumoniae complex</taxon>
    </lineage>
</organism>
<gene>
    <name evidence="1" type="primary">mraZ</name>
    <name type="ordered locus">KPK_4656</name>
</gene>
<dbReference type="EMBL" id="CP000964">
    <property type="protein sequence ID" value="ACI10947.1"/>
    <property type="molecule type" value="Genomic_DNA"/>
</dbReference>
<dbReference type="SMR" id="B5Y1V6"/>
<dbReference type="KEGG" id="kpe:KPK_4656"/>
<dbReference type="HOGENOM" id="CLU_107907_2_0_6"/>
<dbReference type="Proteomes" id="UP000001734">
    <property type="component" value="Chromosome"/>
</dbReference>
<dbReference type="GO" id="GO:0005737">
    <property type="term" value="C:cytoplasm"/>
    <property type="evidence" value="ECO:0007669"/>
    <property type="project" value="UniProtKB-UniRule"/>
</dbReference>
<dbReference type="GO" id="GO:0009295">
    <property type="term" value="C:nucleoid"/>
    <property type="evidence" value="ECO:0007669"/>
    <property type="project" value="UniProtKB-SubCell"/>
</dbReference>
<dbReference type="GO" id="GO:0003700">
    <property type="term" value="F:DNA-binding transcription factor activity"/>
    <property type="evidence" value="ECO:0007669"/>
    <property type="project" value="UniProtKB-UniRule"/>
</dbReference>
<dbReference type="GO" id="GO:0000976">
    <property type="term" value="F:transcription cis-regulatory region binding"/>
    <property type="evidence" value="ECO:0007669"/>
    <property type="project" value="TreeGrafter"/>
</dbReference>
<dbReference type="GO" id="GO:2000143">
    <property type="term" value="P:negative regulation of DNA-templated transcription initiation"/>
    <property type="evidence" value="ECO:0007669"/>
    <property type="project" value="TreeGrafter"/>
</dbReference>
<dbReference type="CDD" id="cd16321">
    <property type="entry name" value="MraZ_C"/>
    <property type="match status" value="1"/>
</dbReference>
<dbReference type="CDD" id="cd16320">
    <property type="entry name" value="MraZ_N"/>
    <property type="match status" value="1"/>
</dbReference>
<dbReference type="FunFam" id="3.40.1550.20:FF:000001">
    <property type="entry name" value="Transcriptional regulator MraZ"/>
    <property type="match status" value="1"/>
</dbReference>
<dbReference type="Gene3D" id="3.40.1550.20">
    <property type="entry name" value="Transcriptional regulator MraZ domain"/>
    <property type="match status" value="1"/>
</dbReference>
<dbReference type="HAMAP" id="MF_01008">
    <property type="entry name" value="MraZ"/>
    <property type="match status" value="1"/>
</dbReference>
<dbReference type="InterPro" id="IPR003444">
    <property type="entry name" value="MraZ"/>
</dbReference>
<dbReference type="InterPro" id="IPR035644">
    <property type="entry name" value="MraZ_C"/>
</dbReference>
<dbReference type="InterPro" id="IPR020603">
    <property type="entry name" value="MraZ_dom"/>
</dbReference>
<dbReference type="InterPro" id="IPR035642">
    <property type="entry name" value="MraZ_N"/>
</dbReference>
<dbReference type="InterPro" id="IPR038619">
    <property type="entry name" value="MraZ_sf"/>
</dbReference>
<dbReference type="InterPro" id="IPR007159">
    <property type="entry name" value="SpoVT-AbrB_dom"/>
</dbReference>
<dbReference type="InterPro" id="IPR037914">
    <property type="entry name" value="SpoVT-AbrB_sf"/>
</dbReference>
<dbReference type="NCBIfam" id="TIGR00242">
    <property type="entry name" value="division/cell wall cluster transcriptional repressor MraZ"/>
    <property type="match status" value="1"/>
</dbReference>
<dbReference type="PANTHER" id="PTHR34701">
    <property type="entry name" value="TRANSCRIPTIONAL REGULATOR MRAZ"/>
    <property type="match status" value="1"/>
</dbReference>
<dbReference type="PANTHER" id="PTHR34701:SF1">
    <property type="entry name" value="TRANSCRIPTIONAL REGULATOR MRAZ"/>
    <property type="match status" value="1"/>
</dbReference>
<dbReference type="Pfam" id="PF02381">
    <property type="entry name" value="MraZ"/>
    <property type="match status" value="2"/>
</dbReference>
<dbReference type="SUPFAM" id="SSF89447">
    <property type="entry name" value="AbrB/MazE/MraZ-like"/>
    <property type="match status" value="1"/>
</dbReference>
<dbReference type="PROSITE" id="PS51740">
    <property type="entry name" value="SPOVT_ABRB"/>
    <property type="match status" value="2"/>
</dbReference>
<sequence length="152" mass="17341">MFRGATLVNLDSKGRLAVPTRYRDGLIEDAAGQLVCTIDIHHPCLLLYPLPEWEIIEQKLSRLSSMNPVERRVQRLLLGHASECQMDNAGRLLIAPVLRQHAGLTKEVMLVGQFNKFELWDETTWYQRVKEDIDAEQSATGELSERLQDLSL</sequence>
<protein>
    <recommendedName>
        <fullName>Transcriptional regulator MraZ</fullName>
    </recommendedName>
</protein>
<reference key="1">
    <citation type="journal article" date="2008" name="PLoS Genet.">
        <title>Complete genome sequence of the N2-fixing broad host range endophyte Klebsiella pneumoniae 342 and virulence predictions verified in mice.</title>
        <authorList>
            <person name="Fouts D.E."/>
            <person name="Tyler H.L."/>
            <person name="DeBoy R.T."/>
            <person name="Daugherty S."/>
            <person name="Ren Q."/>
            <person name="Badger J.H."/>
            <person name="Durkin A.S."/>
            <person name="Huot H."/>
            <person name="Shrivastava S."/>
            <person name="Kothari S."/>
            <person name="Dodson R.J."/>
            <person name="Mohamoud Y."/>
            <person name="Khouri H."/>
            <person name="Roesch L.F.W."/>
            <person name="Krogfelt K.A."/>
            <person name="Struve C."/>
            <person name="Triplett E.W."/>
            <person name="Methe B.A."/>
        </authorList>
    </citation>
    <scope>NUCLEOTIDE SEQUENCE [LARGE SCALE GENOMIC DNA]</scope>
    <source>
        <strain>342</strain>
    </source>
</reference>
<keyword id="KW-0963">Cytoplasm</keyword>
<keyword id="KW-0238">DNA-binding</keyword>
<keyword id="KW-0677">Repeat</keyword>
<keyword id="KW-0678">Repressor</keyword>
<keyword id="KW-0804">Transcription</keyword>
<keyword id="KW-0805">Transcription regulation</keyword>
<name>MRAZ_KLEP3</name>
<proteinExistence type="inferred from homology"/>
<evidence type="ECO:0000255" key="1">
    <source>
        <dbReference type="HAMAP-Rule" id="MF_01008"/>
    </source>
</evidence>
<evidence type="ECO:0000255" key="2">
    <source>
        <dbReference type="PROSITE-ProRule" id="PRU01076"/>
    </source>
</evidence>